<gene>
    <name evidence="1" type="primary">serC</name>
    <name type="ordered locus">KPN78578_09100</name>
    <name type="ORF">KPN_00935</name>
</gene>
<organism>
    <name type="scientific">Klebsiella pneumoniae subsp. pneumoniae (strain ATCC 700721 / MGH 78578)</name>
    <dbReference type="NCBI Taxonomy" id="272620"/>
    <lineage>
        <taxon>Bacteria</taxon>
        <taxon>Pseudomonadati</taxon>
        <taxon>Pseudomonadota</taxon>
        <taxon>Gammaproteobacteria</taxon>
        <taxon>Enterobacterales</taxon>
        <taxon>Enterobacteriaceae</taxon>
        <taxon>Klebsiella/Raoultella group</taxon>
        <taxon>Klebsiella</taxon>
        <taxon>Klebsiella pneumoniae complex</taxon>
    </lineage>
</organism>
<reference key="1">
    <citation type="submission" date="2006-09" db="EMBL/GenBank/DDBJ databases">
        <authorList>
            <consortium name="The Klebsiella pneumonia Genome Sequencing Project"/>
            <person name="McClelland M."/>
            <person name="Sanderson E.K."/>
            <person name="Spieth J."/>
            <person name="Clifton W.S."/>
            <person name="Latreille P."/>
            <person name="Sabo A."/>
            <person name="Pepin K."/>
            <person name="Bhonagiri V."/>
            <person name="Porwollik S."/>
            <person name="Ali J."/>
            <person name="Wilson R.K."/>
        </authorList>
    </citation>
    <scope>NUCLEOTIDE SEQUENCE [LARGE SCALE GENOMIC DNA]</scope>
    <source>
        <strain>ATCC 700721 / MGH 78578</strain>
    </source>
</reference>
<protein>
    <recommendedName>
        <fullName evidence="1">Phosphoserine aminotransferase</fullName>
        <ecNumber evidence="1">2.6.1.52</ecNumber>
    </recommendedName>
    <alternativeName>
        <fullName evidence="1">Phosphohydroxythreonine aminotransferase</fullName>
        <shortName evidence="1">PSAT</shortName>
    </alternativeName>
</protein>
<feature type="chain" id="PRO_1000203543" description="Phosphoserine aminotransferase">
    <location>
        <begin position="1"/>
        <end position="362"/>
    </location>
</feature>
<feature type="binding site" evidence="1">
    <location>
        <position position="9"/>
    </location>
    <ligand>
        <name>L-glutamate</name>
        <dbReference type="ChEBI" id="CHEBI:29985"/>
    </ligand>
</feature>
<feature type="binding site" evidence="1">
    <location>
        <position position="42"/>
    </location>
    <ligand>
        <name>L-glutamate</name>
        <dbReference type="ChEBI" id="CHEBI:29985"/>
    </ligand>
</feature>
<feature type="binding site" evidence="1">
    <location>
        <begin position="76"/>
        <end position="77"/>
    </location>
    <ligand>
        <name>pyridoxal 5'-phosphate</name>
        <dbReference type="ChEBI" id="CHEBI:597326"/>
    </ligand>
</feature>
<feature type="binding site" evidence="1">
    <location>
        <position position="102"/>
    </location>
    <ligand>
        <name>pyridoxal 5'-phosphate</name>
        <dbReference type="ChEBI" id="CHEBI:597326"/>
    </ligand>
</feature>
<feature type="binding site" evidence="1">
    <location>
        <position position="153"/>
    </location>
    <ligand>
        <name>pyridoxal 5'-phosphate</name>
        <dbReference type="ChEBI" id="CHEBI:597326"/>
    </ligand>
</feature>
<feature type="binding site" evidence="1">
    <location>
        <position position="174"/>
    </location>
    <ligand>
        <name>pyridoxal 5'-phosphate</name>
        <dbReference type="ChEBI" id="CHEBI:597326"/>
    </ligand>
</feature>
<feature type="binding site" evidence="1">
    <location>
        <position position="197"/>
    </location>
    <ligand>
        <name>pyridoxal 5'-phosphate</name>
        <dbReference type="ChEBI" id="CHEBI:597326"/>
    </ligand>
</feature>
<feature type="binding site" evidence="1">
    <location>
        <begin position="239"/>
        <end position="240"/>
    </location>
    <ligand>
        <name>pyridoxal 5'-phosphate</name>
        <dbReference type="ChEBI" id="CHEBI:597326"/>
    </ligand>
</feature>
<feature type="modified residue" description="N6-(pyridoxal phosphate)lysine" evidence="1">
    <location>
        <position position="198"/>
    </location>
</feature>
<feature type="strand" evidence="2">
    <location>
        <begin position="9"/>
        <end position="11"/>
    </location>
</feature>
<feature type="helix" evidence="2">
    <location>
        <begin position="16"/>
        <end position="24"/>
    </location>
</feature>
<feature type="strand" evidence="2">
    <location>
        <begin position="26"/>
        <end position="28"/>
    </location>
</feature>
<feature type="strand" evidence="2">
    <location>
        <begin position="32"/>
        <end position="34"/>
    </location>
</feature>
<feature type="helix" evidence="2">
    <location>
        <begin position="36"/>
        <end position="38"/>
    </location>
</feature>
<feature type="helix" evidence="2">
    <location>
        <begin position="44"/>
        <end position="61"/>
    </location>
</feature>
<feature type="strand" evidence="2">
    <location>
        <begin position="67"/>
        <end position="74"/>
    </location>
</feature>
<feature type="helix" evidence="2">
    <location>
        <begin position="75"/>
        <end position="87"/>
    </location>
</feature>
<feature type="strand" evidence="2">
    <location>
        <begin position="95"/>
        <end position="100"/>
    </location>
</feature>
<feature type="helix" evidence="2">
    <location>
        <begin position="101"/>
        <end position="110"/>
    </location>
</feature>
<feature type="turn" evidence="2">
    <location>
        <begin position="111"/>
        <end position="113"/>
    </location>
</feature>
<feature type="strand" evidence="2">
    <location>
        <begin position="117"/>
        <end position="120"/>
    </location>
</feature>
<feature type="strand" evidence="2">
    <location>
        <begin position="122"/>
        <end position="125"/>
    </location>
</feature>
<feature type="strand" evidence="2">
    <location>
        <begin position="128"/>
        <end position="131"/>
    </location>
</feature>
<feature type="helix" evidence="2">
    <location>
        <begin position="134"/>
        <end position="136"/>
    </location>
</feature>
<feature type="strand" evidence="2">
    <location>
        <begin position="146"/>
        <end position="148"/>
    </location>
</feature>
<feature type="strand" evidence="2">
    <location>
        <begin position="150"/>
        <end position="152"/>
    </location>
</feature>
<feature type="turn" evidence="2">
    <location>
        <begin position="153"/>
        <end position="156"/>
    </location>
</feature>
<feature type="strand" evidence="2">
    <location>
        <begin position="171"/>
        <end position="174"/>
    </location>
</feature>
<feature type="turn" evidence="2">
    <location>
        <begin position="176"/>
        <end position="180"/>
    </location>
</feature>
<feature type="helix" evidence="2">
    <location>
        <begin position="186"/>
        <end position="188"/>
    </location>
</feature>
<feature type="strand" evidence="2">
    <location>
        <begin position="190"/>
        <end position="196"/>
    </location>
</feature>
<feature type="turn" evidence="2">
    <location>
        <begin position="197"/>
        <end position="200"/>
    </location>
</feature>
<feature type="strand" evidence="2">
    <location>
        <begin position="201"/>
        <end position="204"/>
    </location>
</feature>
<feature type="strand" evidence="2">
    <location>
        <begin position="206"/>
        <end position="211"/>
    </location>
</feature>
<feature type="helix" evidence="2">
    <location>
        <begin position="212"/>
        <end position="214"/>
    </location>
</feature>
<feature type="helix" evidence="2">
    <location>
        <begin position="224"/>
        <end position="226"/>
    </location>
</feature>
<feature type="helix" evidence="2">
    <location>
        <begin position="228"/>
        <end position="233"/>
    </location>
</feature>
<feature type="turn" evidence="2">
    <location>
        <begin position="234"/>
        <end position="236"/>
    </location>
</feature>
<feature type="helix" evidence="2">
    <location>
        <begin position="243"/>
        <end position="259"/>
    </location>
</feature>
<feature type="helix" evidence="2">
    <location>
        <begin position="262"/>
        <end position="281"/>
    </location>
</feature>
<feature type="strand" evidence="2">
    <location>
        <begin position="284"/>
        <end position="287"/>
    </location>
</feature>
<feature type="helix" evidence="2">
    <location>
        <begin position="292"/>
        <end position="294"/>
    </location>
</feature>
<feature type="strand" evidence="2">
    <location>
        <begin position="297"/>
        <end position="306"/>
    </location>
</feature>
<feature type="helix" evidence="2">
    <location>
        <begin position="307"/>
        <end position="309"/>
    </location>
</feature>
<feature type="helix" evidence="2">
    <location>
        <begin position="310"/>
        <end position="319"/>
    </location>
</feature>
<feature type="strand" evidence="2">
    <location>
        <begin position="334"/>
        <end position="337"/>
    </location>
</feature>
<feature type="helix" evidence="2">
    <location>
        <begin position="344"/>
        <end position="361"/>
    </location>
</feature>
<evidence type="ECO:0000255" key="1">
    <source>
        <dbReference type="HAMAP-Rule" id="MF_00160"/>
    </source>
</evidence>
<evidence type="ECO:0007829" key="2">
    <source>
        <dbReference type="PDB" id="7T7J"/>
    </source>
</evidence>
<sequence>MAQVYNFSSGPAMLPAEVLKLAQQELCDWHGLGTSVMEISHRGKEFIQVAEEAEQDFRALLNIPSNYKVLFCHGGGRGQFAGIPLNILGDKKVADYVDAGYWAASAVKEAKKYCTPNVIDAKITVDGKRAVKPMSEWQLTPGAAYLHYCPNETIDGIAIDETPNFGDDVIVTADFSSTILSREIDVNRFGVIYAGAQKNIGPAGLTLVIVREDLLGKASVACPSILDYTVLSENDSMFNTPPTFAWYLAGLVFKWLKQQGGVAAMDKINQQKAELLYGVIDNSGFYRNDVAQANRSRMNVPFQLADSALDKLFLEESFAAGLHALKGHRVVGGMRASIYNAMPLDGVKTLTDFMLDFERRHG</sequence>
<comment type="function">
    <text evidence="1">Catalyzes the reversible conversion of 3-phosphohydroxypyruvate to phosphoserine and of 3-hydroxy-2-oxo-4-phosphonooxybutanoate to phosphohydroxythreonine.</text>
</comment>
<comment type="catalytic activity">
    <reaction evidence="1">
        <text>O-phospho-L-serine + 2-oxoglutarate = 3-phosphooxypyruvate + L-glutamate</text>
        <dbReference type="Rhea" id="RHEA:14329"/>
        <dbReference type="ChEBI" id="CHEBI:16810"/>
        <dbReference type="ChEBI" id="CHEBI:18110"/>
        <dbReference type="ChEBI" id="CHEBI:29985"/>
        <dbReference type="ChEBI" id="CHEBI:57524"/>
        <dbReference type="EC" id="2.6.1.52"/>
    </reaction>
</comment>
<comment type="catalytic activity">
    <reaction evidence="1">
        <text>4-(phosphooxy)-L-threonine + 2-oxoglutarate = (R)-3-hydroxy-2-oxo-4-phosphooxybutanoate + L-glutamate</text>
        <dbReference type="Rhea" id="RHEA:16573"/>
        <dbReference type="ChEBI" id="CHEBI:16810"/>
        <dbReference type="ChEBI" id="CHEBI:29985"/>
        <dbReference type="ChEBI" id="CHEBI:58452"/>
        <dbReference type="ChEBI" id="CHEBI:58538"/>
        <dbReference type="EC" id="2.6.1.52"/>
    </reaction>
</comment>
<comment type="cofactor">
    <cofactor evidence="1">
        <name>pyridoxal 5'-phosphate</name>
        <dbReference type="ChEBI" id="CHEBI:597326"/>
    </cofactor>
    <text evidence="1">Binds 1 pyridoxal phosphate per subunit.</text>
</comment>
<comment type="pathway">
    <text evidence="1">Amino-acid biosynthesis; L-serine biosynthesis; L-serine from 3-phospho-D-glycerate: step 2/3.</text>
</comment>
<comment type="pathway">
    <text evidence="1">Cofactor biosynthesis; pyridoxine 5'-phosphate biosynthesis; pyridoxine 5'-phosphate from D-erythrose 4-phosphate: step 3/5.</text>
</comment>
<comment type="subunit">
    <text evidence="1">Homodimer.</text>
</comment>
<comment type="subcellular location">
    <subcellularLocation>
        <location evidence="1">Cytoplasm</location>
    </subcellularLocation>
</comment>
<comment type="similarity">
    <text evidence="1">Belongs to the class-V pyridoxal-phosphate-dependent aminotransferase family. SerC subfamily.</text>
</comment>
<dbReference type="EC" id="2.6.1.52" evidence="1"/>
<dbReference type="EMBL" id="CP000647">
    <property type="protein sequence ID" value="ABR76371.1"/>
    <property type="molecule type" value="Genomic_DNA"/>
</dbReference>
<dbReference type="RefSeq" id="WP_009486275.1">
    <property type="nucleotide sequence ID" value="NC_009648.1"/>
</dbReference>
<dbReference type="PDB" id="7T7J">
    <property type="method" value="X-ray"/>
    <property type="resolution" value="1.50 A"/>
    <property type="chains" value="A/B=1-362"/>
</dbReference>
<dbReference type="PDBsum" id="7T7J"/>
<dbReference type="SMR" id="A6T700"/>
<dbReference type="STRING" id="272620.KPN_00935"/>
<dbReference type="jPOST" id="A6T700"/>
<dbReference type="PaxDb" id="272620-KPN_00935"/>
<dbReference type="EnsemblBacteria" id="ABR76371">
    <property type="protein sequence ID" value="ABR76371"/>
    <property type="gene ID" value="KPN_00935"/>
</dbReference>
<dbReference type="KEGG" id="kpn:KPN_00935"/>
<dbReference type="HOGENOM" id="CLU_034866_0_2_6"/>
<dbReference type="UniPathway" id="UPA00135">
    <property type="reaction ID" value="UER00197"/>
</dbReference>
<dbReference type="UniPathway" id="UPA00244">
    <property type="reaction ID" value="UER00311"/>
</dbReference>
<dbReference type="Proteomes" id="UP000000265">
    <property type="component" value="Chromosome"/>
</dbReference>
<dbReference type="GO" id="GO:0005737">
    <property type="term" value="C:cytoplasm"/>
    <property type="evidence" value="ECO:0007669"/>
    <property type="project" value="UniProtKB-SubCell"/>
</dbReference>
<dbReference type="GO" id="GO:0004648">
    <property type="term" value="F:O-phospho-L-serine:2-oxoglutarate aminotransferase activity"/>
    <property type="evidence" value="ECO:0007669"/>
    <property type="project" value="UniProtKB-UniRule"/>
</dbReference>
<dbReference type="GO" id="GO:0030170">
    <property type="term" value="F:pyridoxal phosphate binding"/>
    <property type="evidence" value="ECO:0007669"/>
    <property type="project" value="UniProtKB-UniRule"/>
</dbReference>
<dbReference type="GO" id="GO:0006564">
    <property type="term" value="P:L-serine biosynthetic process"/>
    <property type="evidence" value="ECO:0007669"/>
    <property type="project" value="UniProtKB-UniRule"/>
</dbReference>
<dbReference type="GO" id="GO:0008615">
    <property type="term" value="P:pyridoxine biosynthetic process"/>
    <property type="evidence" value="ECO:0007669"/>
    <property type="project" value="UniProtKB-UniRule"/>
</dbReference>
<dbReference type="CDD" id="cd00611">
    <property type="entry name" value="PSAT_like"/>
    <property type="match status" value="1"/>
</dbReference>
<dbReference type="FunFam" id="3.40.640.10:FF:000010">
    <property type="entry name" value="Phosphoserine aminotransferase"/>
    <property type="match status" value="1"/>
</dbReference>
<dbReference type="FunFam" id="3.90.1150.10:FF:000006">
    <property type="entry name" value="Phosphoserine aminotransferase"/>
    <property type="match status" value="1"/>
</dbReference>
<dbReference type="Gene3D" id="3.90.1150.10">
    <property type="entry name" value="Aspartate Aminotransferase, domain 1"/>
    <property type="match status" value="1"/>
</dbReference>
<dbReference type="Gene3D" id="3.40.640.10">
    <property type="entry name" value="Type I PLP-dependent aspartate aminotransferase-like (Major domain)"/>
    <property type="match status" value="1"/>
</dbReference>
<dbReference type="HAMAP" id="MF_00160">
    <property type="entry name" value="SerC_aminotrans_5"/>
    <property type="match status" value="1"/>
</dbReference>
<dbReference type="InterPro" id="IPR000192">
    <property type="entry name" value="Aminotrans_V_dom"/>
</dbReference>
<dbReference type="InterPro" id="IPR020578">
    <property type="entry name" value="Aminotrans_V_PyrdxlP_BS"/>
</dbReference>
<dbReference type="InterPro" id="IPR022278">
    <property type="entry name" value="Pser_aminoTfrase"/>
</dbReference>
<dbReference type="InterPro" id="IPR015424">
    <property type="entry name" value="PyrdxlP-dep_Trfase"/>
</dbReference>
<dbReference type="InterPro" id="IPR015421">
    <property type="entry name" value="PyrdxlP-dep_Trfase_major"/>
</dbReference>
<dbReference type="InterPro" id="IPR015422">
    <property type="entry name" value="PyrdxlP-dep_Trfase_small"/>
</dbReference>
<dbReference type="NCBIfam" id="NF003764">
    <property type="entry name" value="PRK05355.1"/>
    <property type="match status" value="1"/>
</dbReference>
<dbReference type="NCBIfam" id="TIGR01364">
    <property type="entry name" value="serC_1"/>
    <property type="match status" value="1"/>
</dbReference>
<dbReference type="PANTHER" id="PTHR43247">
    <property type="entry name" value="PHOSPHOSERINE AMINOTRANSFERASE"/>
    <property type="match status" value="1"/>
</dbReference>
<dbReference type="PANTHER" id="PTHR43247:SF1">
    <property type="entry name" value="PHOSPHOSERINE AMINOTRANSFERASE"/>
    <property type="match status" value="1"/>
</dbReference>
<dbReference type="Pfam" id="PF00266">
    <property type="entry name" value="Aminotran_5"/>
    <property type="match status" value="1"/>
</dbReference>
<dbReference type="PIRSF" id="PIRSF000525">
    <property type="entry name" value="SerC"/>
    <property type="match status" value="1"/>
</dbReference>
<dbReference type="SUPFAM" id="SSF53383">
    <property type="entry name" value="PLP-dependent transferases"/>
    <property type="match status" value="1"/>
</dbReference>
<dbReference type="PROSITE" id="PS00595">
    <property type="entry name" value="AA_TRANSFER_CLASS_5"/>
    <property type="match status" value="1"/>
</dbReference>
<accession>A6T700</accession>
<keyword id="KW-0002">3D-structure</keyword>
<keyword id="KW-0028">Amino-acid biosynthesis</keyword>
<keyword id="KW-0032">Aminotransferase</keyword>
<keyword id="KW-0963">Cytoplasm</keyword>
<keyword id="KW-0663">Pyridoxal phosphate</keyword>
<keyword id="KW-0664">Pyridoxine biosynthesis</keyword>
<keyword id="KW-0718">Serine biosynthesis</keyword>
<keyword id="KW-0808">Transferase</keyword>
<name>SERC_KLEP7</name>
<proteinExistence type="evidence at protein level"/>